<sequence length="261" mass="28970">MANLLSKTRRITSILQRSVESLQSDLPYNTIADQLAEIIDCNACIIDGSGIILGYAMKYKTNTDRVEEFFQAKKLPDDYVKSASRIYDTEANLSVENDLTIFPIESKDIYPDGLTTIAPIYGGGMRLGSLIIWRNDKEFNDDDLILIEISSTVVGIQLLNLQTENLEETIRKQTAINMAINTLSYSEMKAVAAILNELDGNEGRLTASVIADRIGITRSVIVNALRKLESAGIIESRSLGMKGTYLKVINEGIFDKLKDYS</sequence>
<comment type="function">
    <text evidence="1">DNA-binding global transcriptional regulator which is involved in the adaptive response to starvation and acts by directly or indirectly controlling the expression of numerous genes in response to nutrient availability. During rapid exponential growth, CodY is highly active and represses genes whose products allow adaptation to nutrient depletion.</text>
</comment>
<comment type="subcellular location">
    <subcellularLocation>
        <location evidence="1">Cytoplasm</location>
    </subcellularLocation>
</comment>
<comment type="similarity">
    <text evidence="1">Belongs to the CodY family.</text>
</comment>
<dbReference type="EMBL" id="AE014133">
    <property type="protein sequence ID" value="AAN59449.1"/>
    <property type="molecule type" value="Genomic_DNA"/>
</dbReference>
<dbReference type="RefSeq" id="NP_722143.1">
    <property type="nucleotide sequence ID" value="NC_004350.2"/>
</dbReference>
<dbReference type="RefSeq" id="WP_002263472.1">
    <property type="nucleotide sequence ID" value="NC_004350.2"/>
</dbReference>
<dbReference type="SMR" id="P59388"/>
<dbReference type="STRING" id="210007.SMU_1824c"/>
<dbReference type="GeneID" id="93858758"/>
<dbReference type="KEGG" id="smu:SMU_1824c"/>
<dbReference type="PATRIC" id="fig|210007.7.peg.1629"/>
<dbReference type="eggNOG" id="COG4465">
    <property type="taxonomic scope" value="Bacteria"/>
</dbReference>
<dbReference type="HOGENOM" id="CLU_089581_0_0_9"/>
<dbReference type="OrthoDB" id="2056at2"/>
<dbReference type="PhylomeDB" id="P59388"/>
<dbReference type="Proteomes" id="UP000002512">
    <property type="component" value="Chromosome"/>
</dbReference>
<dbReference type="GO" id="GO:0005737">
    <property type="term" value="C:cytoplasm"/>
    <property type="evidence" value="ECO:0007669"/>
    <property type="project" value="UniProtKB-SubCell"/>
</dbReference>
<dbReference type="GO" id="GO:0003677">
    <property type="term" value="F:DNA binding"/>
    <property type="evidence" value="ECO:0007669"/>
    <property type="project" value="UniProtKB-UniRule"/>
</dbReference>
<dbReference type="GO" id="GO:0003700">
    <property type="term" value="F:DNA-binding transcription factor activity"/>
    <property type="evidence" value="ECO:0007669"/>
    <property type="project" value="InterPro"/>
</dbReference>
<dbReference type="GO" id="GO:0005525">
    <property type="term" value="F:GTP binding"/>
    <property type="evidence" value="ECO:0007669"/>
    <property type="project" value="InterPro"/>
</dbReference>
<dbReference type="GO" id="GO:0045892">
    <property type="term" value="P:negative regulation of DNA-templated transcription"/>
    <property type="evidence" value="ECO:0007669"/>
    <property type="project" value="UniProtKB-UniRule"/>
</dbReference>
<dbReference type="CDD" id="cd00090">
    <property type="entry name" value="HTH_ARSR"/>
    <property type="match status" value="1"/>
</dbReference>
<dbReference type="FunFam" id="1.10.10.10:FF:000034">
    <property type="entry name" value="GTP-sensing transcriptional pleiotropic repressor CodY"/>
    <property type="match status" value="1"/>
</dbReference>
<dbReference type="FunFam" id="3.30.450.40:FF:000003">
    <property type="entry name" value="GTP-sensing transcriptional pleiotropic repressor CodY"/>
    <property type="match status" value="1"/>
</dbReference>
<dbReference type="Gene3D" id="3.30.450.40">
    <property type="match status" value="1"/>
</dbReference>
<dbReference type="Gene3D" id="1.10.10.10">
    <property type="entry name" value="Winged helix-like DNA-binding domain superfamily/Winged helix DNA-binding domain"/>
    <property type="match status" value="1"/>
</dbReference>
<dbReference type="HAMAP" id="MF_00621">
    <property type="entry name" value="HTH_type_CodY"/>
    <property type="match status" value="1"/>
</dbReference>
<dbReference type="InterPro" id="IPR011991">
    <property type="entry name" value="ArsR-like_HTH"/>
</dbReference>
<dbReference type="InterPro" id="IPR014154">
    <property type="entry name" value="CodY"/>
</dbReference>
<dbReference type="InterPro" id="IPR029016">
    <property type="entry name" value="GAF-like_dom_sf"/>
</dbReference>
<dbReference type="InterPro" id="IPR013198">
    <property type="entry name" value="GTP_trans_reg_CodY_C"/>
</dbReference>
<dbReference type="InterPro" id="IPR010312">
    <property type="entry name" value="Transc_reg_CodY_N"/>
</dbReference>
<dbReference type="InterPro" id="IPR036388">
    <property type="entry name" value="WH-like_DNA-bd_sf"/>
</dbReference>
<dbReference type="InterPro" id="IPR036390">
    <property type="entry name" value="WH_DNA-bd_sf"/>
</dbReference>
<dbReference type="NCBIfam" id="TIGR02787">
    <property type="entry name" value="codY_Gpos"/>
    <property type="match status" value="1"/>
</dbReference>
<dbReference type="NCBIfam" id="NF003170">
    <property type="entry name" value="PRK04158.1"/>
    <property type="match status" value="1"/>
</dbReference>
<dbReference type="PANTHER" id="PTHR40062:SF1">
    <property type="entry name" value="GLOBAL TRANSCRIPTIONAL REGULATOR CODY"/>
    <property type="match status" value="1"/>
</dbReference>
<dbReference type="PANTHER" id="PTHR40062">
    <property type="entry name" value="GTP-SENSING TRANSCRIPTIONAL PLEIOTROPIC REPRESSOR CODY"/>
    <property type="match status" value="1"/>
</dbReference>
<dbReference type="Pfam" id="PF06018">
    <property type="entry name" value="CodY"/>
    <property type="match status" value="1"/>
</dbReference>
<dbReference type="Pfam" id="PF08222">
    <property type="entry name" value="HTH_CodY"/>
    <property type="match status" value="1"/>
</dbReference>
<dbReference type="PIRSF" id="PIRSF011572">
    <property type="entry name" value="GTP_sensing_CodY"/>
    <property type="match status" value="1"/>
</dbReference>
<dbReference type="SUPFAM" id="SSF46785">
    <property type="entry name" value="Winged helix' DNA-binding domain"/>
    <property type="match status" value="1"/>
</dbReference>
<proteinExistence type="inferred from homology"/>
<keyword id="KW-0963">Cytoplasm</keyword>
<keyword id="KW-0238">DNA-binding</keyword>
<keyword id="KW-1185">Reference proteome</keyword>
<keyword id="KW-0678">Repressor</keyword>
<keyword id="KW-0804">Transcription</keyword>
<keyword id="KW-0805">Transcription regulation</keyword>
<reference key="1">
    <citation type="journal article" date="2002" name="Proc. Natl. Acad. Sci. U.S.A.">
        <title>Genome sequence of Streptococcus mutans UA159, a cariogenic dental pathogen.</title>
        <authorList>
            <person name="Ajdic D.J."/>
            <person name="McShan W.M."/>
            <person name="McLaughlin R.E."/>
            <person name="Savic G."/>
            <person name="Chang J."/>
            <person name="Carson M.B."/>
            <person name="Primeaux C."/>
            <person name="Tian R."/>
            <person name="Kenton S."/>
            <person name="Jia H.G."/>
            <person name="Lin S.P."/>
            <person name="Qian Y."/>
            <person name="Li S."/>
            <person name="Zhu H."/>
            <person name="Najar F.Z."/>
            <person name="Lai H."/>
            <person name="White J."/>
            <person name="Roe B.A."/>
            <person name="Ferretti J.J."/>
        </authorList>
    </citation>
    <scope>NUCLEOTIDE SEQUENCE [LARGE SCALE GENOMIC DNA]</scope>
    <source>
        <strain>ATCC 700610 / UA159</strain>
    </source>
</reference>
<protein>
    <recommendedName>
        <fullName evidence="1">Global transcriptional regulator CodY</fullName>
    </recommendedName>
</protein>
<accession>P59388</accession>
<name>CODY_STRMU</name>
<feature type="chain" id="PRO_0000213241" description="Global transcriptional regulator CodY">
    <location>
        <begin position="1"/>
        <end position="261"/>
    </location>
</feature>
<feature type="DNA-binding region" description="H-T-H motif" evidence="1">
    <location>
        <begin position="207"/>
        <end position="226"/>
    </location>
</feature>
<feature type="region of interest" description="GAF domain" evidence="1">
    <location>
        <begin position="1"/>
        <end position="159"/>
    </location>
</feature>
<organism>
    <name type="scientific">Streptococcus mutans serotype c (strain ATCC 700610 / UA159)</name>
    <dbReference type="NCBI Taxonomy" id="210007"/>
    <lineage>
        <taxon>Bacteria</taxon>
        <taxon>Bacillati</taxon>
        <taxon>Bacillota</taxon>
        <taxon>Bacilli</taxon>
        <taxon>Lactobacillales</taxon>
        <taxon>Streptococcaceae</taxon>
        <taxon>Streptococcus</taxon>
    </lineage>
</organism>
<gene>
    <name evidence="1" type="primary">codY</name>
    <name type="ordered locus">SMU_1824c</name>
</gene>
<evidence type="ECO:0000255" key="1">
    <source>
        <dbReference type="HAMAP-Rule" id="MF_00621"/>
    </source>
</evidence>